<evidence type="ECO:0000250" key="1">
    <source>
        <dbReference type="UniProtKB" id="Q9Z4J7"/>
    </source>
</evidence>
<evidence type="ECO:0000255" key="2"/>
<evidence type="ECO:0000256" key="3">
    <source>
        <dbReference type="SAM" id="MobiDB-lite"/>
    </source>
</evidence>
<evidence type="ECO:0000269" key="4">
    <source>
    </source>
</evidence>
<evidence type="ECO:0000303" key="5">
    <source>
    </source>
</evidence>
<evidence type="ECO:0000305" key="6"/>
<evidence type="ECO:0000305" key="7">
    <source>
    </source>
</evidence>
<evidence type="ECO:0000312" key="8">
    <source>
        <dbReference type="EMBL" id="AAN68282.1"/>
    </source>
</evidence>
<reference key="1">
    <citation type="journal article" date="2002" name="Environ. Microbiol.">
        <title>Complete genome sequence and comparative analysis of the metabolically versatile Pseudomonas putida KT2440.</title>
        <authorList>
            <person name="Nelson K.E."/>
            <person name="Weinel C."/>
            <person name="Paulsen I.T."/>
            <person name="Dodson R.J."/>
            <person name="Hilbert H."/>
            <person name="Martins dos Santos V.A.P."/>
            <person name="Fouts D.E."/>
            <person name="Gill S.R."/>
            <person name="Pop M."/>
            <person name="Holmes M."/>
            <person name="Brinkac L.M."/>
            <person name="Beanan M.J."/>
            <person name="DeBoy R.T."/>
            <person name="Daugherty S.C."/>
            <person name="Kolonay J.F."/>
            <person name="Madupu R."/>
            <person name="Nelson W.C."/>
            <person name="White O."/>
            <person name="Peterson J.D."/>
            <person name="Khouri H.M."/>
            <person name="Hance I."/>
            <person name="Chris Lee P."/>
            <person name="Holtzapple E.K."/>
            <person name="Scanlan D."/>
            <person name="Tran K."/>
            <person name="Moazzez A."/>
            <person name="Utterback T.R."/>
            <person name="Rizzo M."/>
            <person name="Lee K."/>
            <person name="Kosack D."/>
            <person name="Moestl D."/>
            <person name="Wedler H."/>
            <person name="Lauber J."/>
            <person name="Stjepandic D."/>
            <person name="Hoheisel J."/>
            <person name="Straetz M."/>
            <person name="Heim S."/>
            <person name="Kiewitz C."/>
            <person name="Eisen J.A."/>
            <person name="Timmis K.N."/>
            <person name="Duesterhoeft A."/>
            <person name="Tuemmler B."/>
            <person name="Fraser C.M."/>
        </authorList>
    </citation>
    <scope>NUCLEOTIDE SEQUENCE [LARGE SCALE GENOMIC DNA]</scope>
    <source>
        <strain>ATCC 47054 / DSM 6125 / CFBP 8728 / NCIMB 11950 / KT2440</strain>
    </source>
</reference>
<reference key="2">
    <citation type="journal article" date="2017" name="MBio">
        <title>Functional Role of Lanthanides in Enzymatic Activity and Transcriptional Regulation of Pyrroloquinoline Quinone-Dependent Alcohol Dehydrogenases in Pseudomonas putida KT2440.</title>
        <authorList>
            <person name="Wehrmann M."/>
            <person name="Billard P."/>
            <person name="Martin-Meriadec A."/>
            <person name="Zegeye A."/>
            <person name="Klebensberger J."/>
        </authorList>
    </citation>
    <scope>FUNCTION</scope>
    <scope>CATALYTIC ACTIVITY</scope>
    <scope>COFACTOR</scope>
    <scope>SUBSTRATE SPECIFICITY</scope>
    <scope>BIOPHYSICOCHEMICAL PROPERTIES</scope>
    <scope>REPRESSION BY LANTHANIDES</scope>
    <scope>DISRUPTION PHENOTYPE</scope>
    <source>
        <strain>ATCC 47054 / DSM 6125 / CFBP 8728 / NCIMB 11950 / KT2440</strain>
    </source>
</reference>
<keyword id="KW-0106">Calcium</keyword>
<keyword id="KW-1015">Disulfide bond</keyword>
<keyword id="KW-0479">Metal-binding</keyword>
<keyword id="KW-0560">Oxidoreductase</keyword>
<keyword id="KW-0574">Periplasm</keyword>
<keyword id="KW-0634">PQQ</keyword>
<keyword id="KW-1185">Reference proteome</keyword>
<keyword id="KW-0732">Signal</keyword>
<feature type="signal peptide" evidence="2">
    <location>
        <begin position="1"/>
        <end position="33"/>
    </location>
</feature>
<feature type="chain" id="PRO_5004302084" description="Quinoprotein alcohol dehydrogenase PedE">
    <location>
        <begin position="34"/>
        <end position="631"/>
    </location>
</feature>
<feature type="region of interest" description="Disordered" evidence="3">
    <location>
        <begin position="250"/>
        <end position="286"/>
    </location>
</feature>
<feature type="region of interest" description="Disordered" evidence="3">
    <location>
        <begin position="421"/>
        <end position="443"/>
    </location>
</feature>
<feature type="active site" description="Proton acceptor" evidence="1">
    <location>
        <position position="358"/>
    </location>
</feature>
<feature type="binding site" evidence="1">
    <location>
        <position position="53"/>
    </location>
    <ligand>
        <name>Ca(2+)</name>
        <dbReference type="ChEBI" id="CHEBI:29108"/>
        <label>1</label>
    </ligand>
</feature>
<feature type="binding site" evidence="1">
    <location>
        <position position="56"/>
    </location>
    <ligand>
        <name>Ca(2+)</name>
        <dbReference type="ChEBI" id="CHEBI:29108"/>
        <label>1</label>
    </ligand>
</feature>
<feature type="binding site" evidence="1">
    <location>
        <position position="59"/>
    </location>
    <ligand>
        <name>Ca(2+)</name>
        <dbReference type="ChEBI" id="CHEBI:29108"/>
        <label>1</label>
    </ligand>
</feature>
<feature type="binding site" evidence="1">
    <location>
        <position position="103"/>
    </location>
    <ligand>
        <name>pyrroloquinoline quinone</name>
        <dbReference type="ChEBI" id="CHEBI:58442"/>
    </ligand>
</feature>
<feature type="binding site" evidence="1">
    <location>
        <position position="153"/>
    </location>
    <ligand>
        <name>pyrroloquinoline quinone</name>
        <dbReference type="ChEBI" id="CHEBI:58442"/>
    </ligand>
</feature>
<feature type="binding site" evidence="1">
    <location>
        <position position="197"/>
    </location>
    <ligand>
        <name>pyrroloquinoline quinone</name>
        <dbReference type="ChEBI" id="CHEBI:58442"/>
    </ligand>
</feature>
<feature type="binding site" evidence="1">
    <location>
        <begin position="215"/>
        <end position="217"/>
    </location>
    <ligand>
        <name>pyrroloquinoline quinone</name>
        <dbReference type="ChEBI" id="CHEBI:58442"/>
    </ligand>
</feature>
<feature type="binding site" evidence="1">
    <location>
        <position position="221"/>
    </location>
    <ligand>
        <name>Ca(2+)</name>
        <dbReference type="ChEBI" id="CHEBI:29108"/>
        <label>2</label>
        <note>catalytic</note>
    </ligand>
</feature>
<feature type="binding site" evidence="1">
    <location>
        <position position="308"/>
    </location>
    <ligand>
        <name>Ca(2+)</name>
        <dbReference type="ChEBI" id="CHEBI:29108"/>
        <label>2</label>
        <note>catalytic</note>
    </ligand>
</feature>
<feature type="binding site" evidence="1">
    <location>
        <position position="358"/>
    </location>
    <ligand>
        <name>Ca(2+)</name>
        <dbReference type="ChEBI" id="CHEBI:29108"/>
        <label>2</label>
        <note>catalytic</note>
    </ligand>
</feature>
<feature type="binding site" evidence="1">
    <location>
        <position position="386"/>
    </location>
    <ligand>
        <name>pyrroloquinoline quinone</name>
        <dbReference type="ChEBI" id="CHEBI:58442"/>
    </ligand>
</feature>
<feature type="binding site" evidence="1">
    <location>
        <position position="531"/>
    </location>
    <ligand>
        <name>pyrroloquinoline quinone</name>
        <dbReference type="ChEBI" id="CHEBI:58442"/>
    </ligand>
</feature>
<feature type="binding site" evidence="1">
    <location>
        <position position="595"/>
    </location>
    <ligand>
        <name>pyrroloquinoline quinone</name>
        <dbReference type="ChEBI" id="CHEBI:58442"/>
    </ligand>
</feature>
<feature type="disulfide bond" evidence="1">
    <location>
        <begin position="147"/>
        <end position="148"/>
    </location>
</feature>
<gene>
    <name evidence="5" type="primary">pedE</name>
    <name evidence="8" type="synonym">qedH-I</name>
    <name evidence="8" type="ordered locus">PP_2674</name>
</gene>
<protein>
    <recommendedName>
        <fullName evidence="5">Quinoprotein alcohol dehydrogenase PedE</fullName>
        <ecNumber evidence="7">1.1.2.8</ecNumber>
    </recommendedName>
    <alternativeName>
        <fullName evidence="5">Ca(2+)-dependent pyrroloquinoline quinone-dependent alcohol dehydrogenase</fullName>
        <shortName evidence="5">Ca(2+)-dependent PQQ-ADH</shortName>
    </alternativeName>
</protein>
<name>PEDE_PSEPK</name>
<organism>
    <name type="scientific">Pseudomonas putida (strain ATCC 47054 / DSM 6125 / CFBP 8728 / NCIMB 11950 / KT2440)</name>
    <dbReference type="NCBI Taxonomy" id="160488"/>
    <lineage>
        <taxon>Bacteria</taxon>
        <taxon>Pseudomonadati</taxon>
        <taxon>Pseudomonadota</taxon>
        <taxon>Gammaproteobacteria</taxon>
        <taxon>Pseudomonadales</taxon>
        <taxon>Pseudomonadaceae</taxon>
        <taxon>Pseudomonas</taxon>
    </lineage>
</organism>
<dbReference type="EC" id="1.1.2.8" evidence="7"/>
<dbReference type="EMBL" id="AE015451">
    <property type="protein sequence ID" value="AAN68282.1"/>
    <property type="molecule type" value="Genomic_DNA"/>
</dbReference>
<dbReference type="RefSeq" id="NP_744818.1">
    <property type="nucleotide sequence ID" value="NC_002947.4"/>
</dbReference>
<dbReference type="SMR" id="Q88JH5"/>
<dbReference type="STRING" id="160488.PP_2674"/>
<dbReference type="PaxDb" id="160488-PP_2674"/>
<dbReference type="KEGG" id="ppu:PP_2674"/>
<dbReference type="PATRIC" id="fig|160488.4.peg.2836"/>
<dbReference type="eggNOG" id="COG4993">
    <property type="taxonomic scope" value="Bacteria"/>
</dbReference>
<dbReference type="HOGENOM" id="CLU_018478_0_0_6"/>
<dbReference type="OrthoDB" id="9794322at2"/>
<dbReference type="PhylomeDB" id="Q88JH5"/>
<dbReference type="BioCyc" id="PPUT160488:G1G01-2855-MONOMER"/>
<dbReference type="SABIO-RK" id="Q88JH5"/>
<dbReference type="Proteomes" id="UP000000556">
    <property type="component" value="Chromosome"/>
</dbReference>
<dbReference type="GO" id="GO:0016020">
    <property type="term" value="C:membrane"/>
    <property type="evidence" value="ECO:0007669"/>
    <property type="project" value="InterPro"/>
</dbReference>
<dbReference type="GO" id="GO:0030288">
    <property type="term" value="C:outer membrane-bounded periplasmic space"/>
    <property type="evidence" value="ECO:0007669"/>
    <property type="project" value="InterPro"/>
</dbReference>
<dbReference type="GO" id="GO:0052934">
    <property type="term" value="F:alcohol dehydrogenase (cytochrome c) activity"/>
    <property type="evidence" value="ECO:0007669"/>
    <property type="project" value="UniProtKB-EC"/>
</dbReference>
<dbReference type="GO" id="GO:0005509">
    <property type="term" value="F:calcium ion binding"/>
    <property type="evidence" value="ECO:0007669"/>
    <property type="project" value="InterPro"/>
</dbReference>
<dbReference type="CDD" id="cd10277">
    <property type="entry name" value="PQQ_ADH_I"/>
    <property type="match status" value="1"/>
</dbReference>
<dbReference type="FunFam" id="2.140.10.10:FF:000003">
    <property type="entry name" value="Methanol dehydrogenase, large subunit"/>
    <property type="match status" value="1"/>
</dbReference>
<dbReference type="Gene3D" id="2.140.10.10">
    <property type="entry name" value="Quinoprotein alcohol dehydrogenase-like superfamily"/>
    <property type="match status" value="1"/>
</dbReference>
<dbReference type="InterPro" id="IPR034119">
    <property type="entry name" value="ADHI"/>
</dbReference>
<dbReference type="InterPro" id="IPR018391">
    <property type="entry name" value="PQQ_b-propeller_rpt"/>
</dbReference>
<dbReference type="InterPro" id="IPR017512">
    <property type="entry name" value="PQQ_MeOH/EtOH_DH"/>
</dbReference>
<dbReference type="InterPro" id="IPR002372">
    <property type="entry name" value="PQQ_rpt_dom"/>
</dbReference>
<dbReference type="InterPro" id="IPR011047">
    <property type="entry name" value="Quinoprotein_ADH-like_sf"/>
</dbReference>
<dbReference type="InterPro" id="IPR001479">
    <property type="entry name" value="Quinoprotein_DH_CS"/>
</dbReference>
<dbReference type="NCBIfam" id="TIGR03075">
    <property type="entry name" value="PQQ_enz_alc_DH"/>
    <property type="match status" value="1"/>
</dbReference>
<dbReference type="PANTHER" id="PTHR32303">
    <property type="entry name" value="QUINOPROTEIN ALCOHOL DEHYDROGENASE (CYTOCHROME C)"/>
    <property type="match status" value="1"/>
</dbReference>
<dbReference type="PANTHER" id="PTHR32303:SF20">
    <property type="entry name" value="QUINOPROTEIN ETHANOL DEHYDROGENASE"/>
    <property type="match status" value="1"/>
</dbReference>
<dbReference type="Pfam" id="PF01011">
    <property type="entry name" value="PQQ"/>
    <property type="match status" value="2"/>
</dbReference>
<dbReference type="SMART" id="SM00564">
    <property type="entry name" value="PQQ"/>
    <property type="match status" value="6"/>
</dbReference>
<dbReference type="SUPFAM" id="SSF50998">
    <property type="entry name" value="Quinoprotein alcohol dehydrogenase-like"/>
    <property type="match status" value="1"/>
</dbReference>
<dbReference type="PROSITE" id="PS00363">
    <property type="entry name" value="BACTERIAL_PQQ_1"/>
    <property type="match status" value="1"/>
</dbReference>
<dbReference type="PROSITE" id="PS00364">
    <property type="entry name" value="BACTERIAL_PQQ_2"/>
    <property type="match status" value="1"/>
</dbReference>
<sequence length="631" mass="69174">MTIRSLPALSPLALSVRVLLMAGSLALGNVATAASTPAAPAGKNVTWEDIANDHLTTQDVLQYGMGTNAQRWSPLAQVNDKNVFKLTPAWSYSFGDEKQRGQESQAIVSDGVVYVTGSYSRVFALDAKTGKRLWTYNHRLPDNIRPCCDVVNRGAAIYGDKIYFGTLDARVIALDKRTGKVVWNKKFGDHSAGYTMTGAPVLIKDKTSGKVLLIHGSSGDEFGVVGQLFARDPDTGEEVWMRPFVEGHMGRLNGKDSTPTGDVKAPSWPDDPTTETGKVEAWSHGGGAPWQSASFDPETNTIIVGAGNPGPWNTWARTSKDGNPHDFDSLYTSGQVGVDPSTGEVKWFYQHTPNDAWDFSGNNELVLFDYKDKNGNVVKATAHADRNGFFYVVDRNNGKLQNAFPFVDNITWASHIDLKTGRPVENPGQRPAKPLPGETKGKPVEVSPPFLGGKNWNPMAYSQDTGLFYIPGNQWKEEYWTEEVNYKKGSAYLGMGFRIKRMYDDHVGTLRAMDPTTGKLVWEHKEHLPLWAGVLATKGNLVFTGTGDGFFKAFDAKTGKELWKFQTGSGIVSPPITWEQDGEQYIGVTVGYGGAVPLWGGDMAELTKPVAQGGSFWVFKIPSWDNKTAQR</sequence>
<accession>Q88JH5</accession>
<proteinExistence type="evidence at protein level"/>
<comment type="function">
    <text evidence="1 4">Alcohol dehydrogenase that catalyzes the oxidation of a range of substrates, including linear and aromatic primary and secondary alcohols, as well as aldehydes, allowing bacterial growth with a variety of volatile organic compounds (VOCs) as carbon and energy sources (PubMed:28655819). Uses a specific inducible cytochrome c550, encoded by the adjacent gene in the locus, as electron acceptor (By similarity).</text>
</comment>
<comment type="catalytic activity">
    <reaction evidence="7">
        <text>a primary alcohol + 2 Fe(III)-[cytochrome c] = an aldehyde + 2 Fe(II)-[cytochrome c] + 2 H(+)</text>
        <dbReference type="Rhea" id="RHEA:51020"/>
        <dbReference type="Rhea" id="RHEA-COMP:10350"/>
        <dbReference type="Rhea" id="RHEA-COMP:14399"/>
        <dbReference type="ChEBI" id="CHEBI:15378"/>
        <dbReference type="ChEBI" id="CHEBI:15734"/>
        <dbReference type="ChEBI" id="CHEBI:17478"/>
        <dbReference type="ChEBI" id="CHEBI:29033"/>
        <dbReference type="ChEBI" id="CHEBI:29034"/>
        <dbReference type="EC" id="1.1.2.8"/>
    </reaction>
    <physiologicalReaction direction="left-to-right" evidence="4">
        <dbReference type="Rhea" id="RHEA:51021"/>
    </physiologicalReaction>
</comment>
<comment type="catalytic activity">
    <reaction evidence="7">
        <text>ethanol + 2 Fe(III)-[cytochrome c] = acetaldehyde + 2 Fe(II)-[cytochrome c] + 2 H(+)</text>
        <dbReference type="Rhea" id="RHEA:62200"/>
        <dbReference type="Rhea" id="RHEA-COMP:10350"/>
        <dbReference type="Rhea" id="RHEA-COMP:14399"/>
        <dbReference type="ChEBI" id="CHEBI:15343"/>
        <dbReference type="ChEBI" id="CHEBI:15378"/>
        <dbReference type="ChEBI" id="CHEBI:16236"/>
        <dbReference type="ChEBI" id="CHEBI:29033"/>
        <dbReference type="ChEBI" id="CHEBI:29034"/>
    </reaction>
    <physiologicalReaction direction="left-to-right" evidence="4">
        <dbReference type="Rhea" id="RHEA:62201"/>
    </physiologicalReaction>
</comment>
<comment type="catalytic activity">
    <reaction evidence="7">
        <text>butan-1-ol + 2 Fe(III)-[cytochrome c] = butanal + 2 Fe(II)-[cytochrome c] + 2 H(+)</text>
        <dbReference type="Rhea" id="RHEA:43432"/>
        <dbReference type="Rhea" id="RHEA-COMP:10350"/>
        <dbReference type="Rhea" id="RHEA-COMP:14399"/>
        <dbReference type="ChEBI" id="CHEBI:15378"/>
        <dbReference type="ChEBI" id="CHEBI:15743"/>
        <dbReference type="ChEBI" id="CHEBI:28885"/>
        <dbReference type="ChEBI" id="CHEBI:29033"/>
        <dbReference type="ChEBI" id="CHEBI:29034"/>
    </reaction>
    <physiologicalReaction direction="left-to-right" evidence="4">
        <dbReference type="Rhea" id="RHEA:43433"/>
    </physiologicalReaction>
</comment>
<comment type="catalytic activity">
    <reaction evidence="7">
        <text>butan-2-ol + 2 Fe(III)-[cytochrome c] = butan-2-one + 2 Fe(II)-[cytochrome c] + 2 H(+)</text>
        <dbReference type="Rhea" id="RHEA:79327"/>
        <dbReference type="Rhea" id="RHEA-COMP:10350"/>
        <dbReference type="Rhea" id="RHEA-COMP:14399"/>
        <dbReference type="ChEBI" id="CHEBI:15378"/>
        <dbReference type="ChEBI" id="CHEBI:28398"/>
        <dbReference type="ChEBI" id="CHEBI:29033"/>
        <dbReference type="ChEBI" id="CHEBI:29034"/>
        <dbReference type="ChEBI" id="CHEBI:35687"/>
    </reaction>
    <physiologicalReaction direction="left-to-right" evidence="7">
        <dbReference type="Rhea" id="RHEA:79328"/>
    </physiologicalReaction>
</comment>
<comment type="catalytic activity">
    <reaction evidence="7">
        <text>2-phenylethanol + 2 Fe(III)-[cytochrome c] = 2-phenylacetaldehyde + 2 Fe(II)-[cytochrome c] + 2 H(+)</text>
        <dbReference type="Rhea" id="RHEA:79319"/>
        <dbReference type="Rhea" id="RHEA-COMP:10350"/>
        <dbReference type="Rhea" id="RHEA-COMP:14399"/>
        <dbReference type="ChEBI" id="CHEBI:15378"/>
        <dbReference type="ChEBI" id="CHEBI:16424"/>
        <dbReference type="ChEBI" id="CHEBI:29033"/>
        <dbReference type="ChEBI" id="CHEBI:29034"/>
        <dbReference type="ChEBI" id="CHEBI:49000"/>
    </reaction>
    <physiologicalReaction direction="left-to-right" evidence="4">
        <dbReference type="Rhea" id="RHEA:79320"/>
    </physiologicalReaction>
</comment>
<comment type="catalytic activity">
    <reaction evidence="7">
        <text>octan-1-ol + 2 Fe(III)-[cytochrome c] = octanal + 2 Fe(II)-[cytochrome c] + 2 H(+)</text>
        <dbReference type="Rhea" id="RHEA:79323"/>
        <dbReference type="Rhea" id="RHEA-COMP:10350"/>
        <dbReference type="Rhea" id="RHEA-COMP:14399"/>
        <dbReference type="ChEBI" id="CHEBI:15378"/>
        <dbReference type="ChEBI" id="CHEBI:16188"/>
        <dbReference type="ChEBI" id="CHEBI:17935"/>
        <dbReference type="ChEBI" id="CHEBI:29033"/>
        <dbReference type="ChEBI" id="CHEBI:29034"/>
    </reaction>
    <physiologicalReaction direction="left-to-right" evidence="4">
        <dbReference type="Rhea" id="RHEA:79324"/>
    </physiologicalReaction>
</comment>
<comment type="catalytic activity">
    <reaction evidence="7">
        <text>hexan-1-ol + 2 Fe(III)-[cytochrome c] = hexanal + 2 Fe(II)-[cytochrome c] + 2 H(+)</text>
        <dbReference type="Rhea" id="RHEA:79331"/>
        <dbReference type="Rhea" id="RHEA-COMP:10350"/>
        <dbReference type="Rhea" id="RHEA-COMP:14399"/>
        <dbReference type="ChEBI" id="CHEBI:15378"/>
        <dbReference type="ChEBI" id="CHEBI:29033"/>
        <dbReference type="ChEBI" id="CHEBI:29034"/>
        <dbReference type="ChEBI" id="CHEBI:87393"/>
        <dbReference type="ChEBI" id="CHEBI:88528"/>
    </reaction>
    <physiologicalReaction direction="left-to-right" evidence="7">
        <dbReference type="Rhea" id="RHEA:79332"/>
    </physiologicalReaction>
</comment>
<comment type="catalytic activity">
    <reaction evidence="7">
        <text>cinnamyl alcohol + 2 Fe(III)-[cytochrome c] = cinnamaldehyde + 2 Fe(II)-[cytochrome c] + 2 H(+)</text>
        <dbReference type="Rhea" id="RHEA:79335"/>
        <dbReference type="Rhea" id="RHEA-COMP:10350"/>
        <dbReference type="Rhea" id="RHEA-COMP:14399"/>
        <dbReference type="ChEBI" id="CHEBI:15378"/>
        <dbReference type="ChEBI" id="CHEBI:17177"/>
        <dbReference type="ChEBI" id="CHEBI:29033"/>
        <dbReference type="ChEBI" id="CHEBI:29034"/>
        <dbReference type="ChEBI" id="CHEBI:142921"/>
    </reaction>
    <physiologicalReaction direction="left-to-right" evidence="7">
        <dbReference type="Rhea" id="RHEA:79336"/>
    </physiologicalReaction>
</comment>
<comment type="catalytic activity">
    <reaction evidence="7">
        <text>farnesol + 2 Fe(III)-[cytochrome c] = farnesal + 2 Fe(II)-[cytochrome c] + 2 H(+)</text>
        <dbReference type="Rhea" id="RHEA:79359"/>
        <dbReference type="Rhea" id="RHEA-COMP:10350"/>
        <dbReference type="Rhea" id="RHEA-COMP:14399"/>
        <dbReference type="ChEBI" id="CHEBI:15378"/>
        <dbReference type="ChEBI" id="CHEBI:24012"/>
        <dbReference type="ChEBI" id="CHEBI:28600"/>
        <dbReference type="ChEBI" id="CHEBI:29033"/>
        <dbReference type="ChEBI" id="CHEBI:29034"/>
    </reaction>
    <physiologicalReaction direction="left-to-right" evidence="7">
        <dbReference type="Rhea" id="RHEA:79360"/>
    </physiologicalReaction>
</comment>
<comment type="catalytic activity">
    <reaction evidence="7">
        <text>an aldehyde + 2 Fe(III)-[cytochrome c] + H2O = a carboxylate + 2 Fe(II)-[cytochrome c] + 3 H(+)</text>
        <dbReference type="Rhea" id="RHEA:79339"/>
        <dbReference type="Rhea" id="RHEA-COMP:10350"/>
        <dbReference type="Rhea" id="RHEA-COMP:14399"/>
        <dbReference type="ChEBI" id="CHEBI:15377"/>
        <dbReference type="ChEBI" id="CHEBI:15378"/>
        <dbReference type="ChEBI" id="CHEBI:17478"/>
        <dbReference type="ChEBI" id="CHEBI:29033"/>
        <dbReference type="ChEBI" id="CHEBI:29034"/>
        <dbReference type="ChEBI" id="CHEBI:29067"/>
    </reaction>
    <physiologicalReaction direction="left-to-right" evidence="7">
        <dbReference type="Rhea" id="RHEA:79340"/>
    </physiologicalReaction>
</comment>
<comment type="catalytic activity">
    <reaction evidence="7">
        <text>acetaldehyde + 2 Fe(III)-[cytochrome c] + H2O = 2 Fe(II)-[cytochrome c] + acetate + 3 H(+)</text>
        <dbReference type="Rhea" id="RHEA:79343"/>
        <dbReference type="Rhea" id="RHEA-COMP:10350"/>
        <dbReference type="Rhea" id="RHEA-COMP:14399"/>
        <dbReference type="ChEBI" id="CHEBI:15343"/>
        <dbReference type="ChEBI" id="CHEBI:15377"/>
        <dbReference type="ChEBI" id="CHEBI:15378"/>
        <dbReference type="ChEBI" id="CHEBI:29033"/>
        <dbReference type="ChEBI" id="CHEBI:29034"/>
        <dbReference type="ChEBI" id="CHEBI:30089"/>
    </reaction>
    <physiologicalReaction direction="left-to-right" evidence="7">
        <dbReference type="Rhea" id="RHEA:79344"/>
    </physiologicalReaction>
</comment>
<comment type="catalytic activity">
    <reaction evidence="7">
        <text>butanal + 2 Fe(III)-[cytochrome c] + H2O = butanoate + 2 Fe(II)-[cytochrome c] + 3 H(+)</text>
        <dbReference type="Rhea" id="RHEA:79347"/>
        <dbReference type="Rhea" id="RHEA-COMP:10350"/>
        <dbReference type="Rhea" id="RHEA-COMP:14399"/>
        <dbReference type="ChEBI" id="CHEBI:15377"/>
        <dbReference type="ChEBI" id="CHEBI:15378"/>
        <dbReference type="ChEBI" id="CHEBI:15743"/>
        <dbReference type="ChEBI" id="CHEBI:17968"/>
        <dbReference type="ChEBI" id="CHEBI:29033"/>
        <dbReference type="ChEBI" id="CHEBI:29034"/>
    </reaction>
    <physiologicalReaction direction="left-to-right" evidence="7">
        <dbReference type="Rhea" id="RHEA:79348"/>
    </physiologicalReaction>
</comment>
<comment type="catalytic activity">
    <reaction evidence="7">
        <text>hexanal + 2 Fe(III)-[cytochrome c] + H2O = hexanoate + 2 Fe(II)-[cytochrome c] + 3 H(+)</text>
        <dbReference type="Rhea" id="RHEA:79351"/>
        <dbReference type="Rhea" id="RHEA-COMP:10350"/>
        <dbReference type="Rhea" id="RHEA-COMP:14399"/>
        <dbReference type="ChEBI" id="CHEBI:15377"/>
        <dbReference type="ChEBI" id="CHEBI:15378"/>
        <dbReference type="ChEBI" id="CHEBI:17120"/>
        <dbReference type="ChEBI" id="CHEBI:29033"/>
        <dbReference type="ChEBI" id="CHEBI:29034"/>
        <dbReference type="ChEBI" id="CHEBI:88528"/>
    </reaction>
    <physiologicalReaction direction="left-to-right" evidence="7">
        <dbReference type="Rhea" id="RHEA:79352"/>
    </physiologicalReaction>
</comment>
<comment type="catalytic activity">
    <reaction evidence="7">
        <text>octanal + 2 Fe(III)-[cytochrome c] + H2O = octanoate + 2 Fe(II)-[cytochrome c] + 3 H(+)</text>
        <dbReference type="Rhea" id="RHEA:79355"/>
        <dbReference type="Rhea" id="RHEA-COMP:10350"/>
        <dbReference type="Rhea" id="RHEA-COMP:14399"/>
        <dbReference type="ChEBI" id="CHEBI:15377"/>
        <dbReference type="ChEBI" id="CHEBI:15378"/>
        <dbReference type="ChEBI" id="CHEBI:17935"/>
        <dbReference type="ChEBI" id="CHEBI:25646"/>
        <dbReference type="ChEBI" id="CHEBI:29033"/>
        <dbReference type="ChEBI" id="CHEBI:29034"/>
    </reaction>
    <physiologicalReaction direction="left-to-right" evidence="7">
        <dbReference type="Rhea" id="RHEA:79356"/>
    </physiologicalReaction>
</comment>
<comment type="cofactor">
    <cofactor evidence="4">
        <name>pyrroloquinoline quinone</name>
        <dbReference type="ChEBI" id="CHEBI:58442"/>
    </cofactor>
    <text evidence="1">Binds 1 PQQ group non-covalently per subunit.</text>
</comment>
<comment type="cofactor">
    <cofactor evidence="4">
        <name>Ca(2+)</name>
        <dbReference type="ChEBI" id="CHEBI:29108"/>
    </cofactor>
    <text evidence="1">Binds 2 calcium ions per subunit. One is located in the active-site cavity near PQQ and the second calcium binds at the N-terminus and contributes to the stability of the native enzyme.</text>
</comment>
<comment type="biophysicochemical properties">
    <kinetics>
        <KM evidence="4">85 uM for ethanol</KM>
        <KM evidence="4">899 uM for acetaldehyde</KM>
        <KM evidence="4">115 uM for 2-phenylethanol</KM>
        <Vmax evidence="4">6.1 umol/min/mg enzyme with ethanol as substrate using artificial electron acceptor</Vmax>
        <Vmax evidence="4">5.6 umol/min/mg enzyme with acetaldehyde as substrate using artificial electron acceptor</Vmax>
        <Vmax evidence="4">5.2 umol/min/mg enzyme with 2-phenylethanol as substrate using artificial electron acceptor</Vmax>
    </kinetics>
</comment>
<comment type="subunit">
    <text evidence="1">Homodimer. Interacts with cytochrome c550.</text>
</comment>
<comment type="subcellular location">
    <subcellularLocation>
        <location evidence="7">Periplasm</location>
    </subcellularLocation>
</comment>
<comment type="induction">
    <text evidence="4">Repressed in the presence of lanthanides.</text>
</comment>
<comment type="PTM">
    <text evidence="1">The disulfide ring formed between the two adjacent cysteine residues Cys-147 and Cys-148 is essential for efficient electron transfer at pH 7 from PedE to its natural electron acceptor cytochrome c550.</text>
</comment>
<comment type="disruption phenotype">
    <text evidence="4">Cells lacking this gene are unable to grow with ethanol, 1-butanol, and 2-phenylethanol in the absence of La(3+), but the addition of 20 uM La(3+) to the agar medium restores the growth of the mutant strain. Cells lacking both pedE and pedH show no growth under both conditions.</text>
</comment>
<comment type="miscellaneous">
    <text evidence="4">The soil-dwelling organism P.putida KT2440 produces 2 PQQ-ADHs, namely, PedE, which is Ca(2+)-dependent, and PedH, which is lanthanide-dependent. These enzymes are crucial for efficient bacterial growth with a variety of volatile alcohols. The functional redundancy of the PQQ-ADHs and inverse transcriptional regulation of PedE and PedH represent an adaptive strategy of P.putida KT2440 to optimize growth with volatile alcohols and aldehyde substrates in response to the availability of different lanthanides in the natural environment of the bacterium.</text>
</comment>
<comment type="similarity">
    <text evidence="6">Belongs to the bacterial PQQ dehydrogenase family.</text>
</comment>